<reference key="1">
    <citation type="journal article" date="2008" name="J. Bacteriol.">
        <title>The pangenome structure of Escherichia coli: comparative genomic analysis of E. coli commensal and pathogenic isolates.</title>
        <authorList>
            <person name="Rasko D.A."/>
            <person name="Rosovitz M.J."/>
            <person name="Myers G.S.A."/>
            <person name="Mongodin E.F."/>
            <person name="Fricke W.F."/>
            <person name="Gajer P."/>
            <person name="Crabtree J."/>
            <person name="Sebaihia M."/>
            <person name="Thomson N.R."/>
            <person name="Chaudhuri R."/>
            <person name="Henderson I.R."/>
            <person name="Sperandio V."/>
            <person name="Ravel J."/>
        </authorList>
    </citation>
    <scope>NUCLEOTIDE SEQUENCE [LARGE SCALE GENOMIC DNA]</scope>
    <source>
        <strain>HS</strain>
    </source>
</reference>
<evidence type="ECO:0000255" key="1">
    <source>
        <dbReference type="HAMAP-Rule" id="MF_01092"/>
    </source>
</evidence>
<organism>
    <name type="scientific">Escherichia coli O9:H4 (strain HS)</name>
    <dbReference type="NCBI Taxonomy" id="331112"/>
    <lineage>
        <taxon>Bacteria</taxon>
        <taxon>Pseudomonadati</taxon>
        <taxon>Pseudomonadota</taxon>
        <taxon>Gammaproteobacteria</taxon>
        <taxon>Enterobacterales</taxon>
        <taxon>Enterobacteriaceae</taxon>
        <taxon>Escherichia</taxon>
    </lineage>
</organism>
<sequence length="247" mass="28292">MQTQVLFEHPLNEKMRTWLRIEFLIQQLTVNLPIVDHAGALHFFRNVSELLDVFERGEVRTELLKELDRQQRKLQTWIGVPGVDQSRIEALIQQLKAAGSVLISAPRIGQFLREDRLIALVRQRLSIPGGCCSFDLPTLHIWLHLPQAQRDSQVETWIASLNPLTQALTMVLDLIRQSAPFRKQTSLNGFYQDNGGDADLLRLNLSLDSQLYPQISGHKSRFAIRFMPLDTENGQVPERLDFELACC</sequence>
<proteinExistence type="inferred from homology"/>
<comment type="function">
    <text evidence="1">Cell division factor that enhances FtsZ-ring assembly. Directly interacts with FtsZ and promotes bundling of FtsZ protofilaments, with a reduction in FtsZ GTPase activity.</text>
</comment>
<comment type="subunit">
    <text evidence="1">Interacts with FtsZ.</text>
</comment>
<comment type="subcellular location">
    <subcellularLocation>
        <location evidence="1">Cytoplasm</location>
    </subcellularLocation>
    <text evidence="1">Localizes to mid-cell in an FtsZ-dependent manner.</text>
</comment>
<comment type="similarity">
    <text evidence="1">Belongs to the ZapD family.</text>
</comment>
<feature type="chain" id="PRO_1000064907" description="Cell division protein ZapD">
    <location>
        <begin position="1"/>
        <end position="247"/>
    </location>
</feature>
<keyword id="KW-0131">Cell cycle</keyword>
<keyword id="KW-0132">Cell division</keyword>
<keyword id="KW-0963">Cytoplasm</keyword>
<keyword id="KW-0717">Septation</keyword>
<gene>
    <name evidence="1" type="primary">zapD</name>
    <name type="ordered locus">EcHS_A0107</name>
</gene>
<accession>A7ZW53</accession>
<name>ZAPD_ECOHS</name>
<dbReference type="EMBL" id="CP000802">
    <property type="protein sequence ID" value="ABV04507.1"/>
    <property type="molecule type" value="Genomic_DNA"/>
</dbReference>
<dbReference type="RefSeq" id="WP_001194734.1">
    <property type="nucleotide sequence ID" value="NC_009800.1"/>
</dbReference>
<dbReference type="SMR" id="A7ZW53"/>
<dbReference type="GeneID" id="93777333"/>
<dbReference type="KEGG" id="ecx:EcHS_A0107"/>
<dbReference type="HOGENOM" id="CLU_076303_0_0_6"/>
<dbReference type="GO" id="GO:0032153">
    <property type="term" value="C:cell division site"/>
    <property type="evidence" value="ECO:0007669"/>
    <property type="project" value="TreeGrafter"/>
</dbReference>
<dbReference type="GO" id="GO:0005737">
    <property type="term" value="C:cytoplasm"/>
    <property type="evidence" value="ECO:0007669"/>
    <property type="project" value="UniProtKB-SubCell"/>
</dbReference>
<dbReference type="GO" id="GO:0000917">
    <property type="term" value="P:division septum assembly"/>
    <property type="evidence" value="ECO:0007669"/>
    <property type="project" value="UniProtKB-KW"/>
</dbReference>
<dbReference type="GO" id="GO:0043093">
    <property type="term" value="P:FtsZ-dependent cytokinesis"/>
    <property type="evidence" value="ECO:0007669"/>
    <property type="project" value="UniProtKB-UniRule"/>
</dbReference>
<dbReference type="FunFam" id="1.10.3900.10:FF:000001">
    <property type="entry name" value="Cell division protein ZapD"/>
    <property type="match status" value="1"/>
</dbReference>
<dbReference type="FunFam" id="2.60.440.10:FF:000001">
    <property type="entry name" value="Cell division protein ZapD"/>
    <property type="match status" value="1"/>
</dbReference>
<dbReference type="Gene3D" id="1.10.3900.10">
    <property type="entry name" value="YacF-like"/>
    <property type="match status" value="1"/>
</dbReference>
<dbReference type="Gene3D" id="2.60.440.10">
    <property type="entry name" value="YacF-like domains"/>
    <property type="match status" value="1"/>
</dbReference>
<dbReference type="HAMAP" id="MF_01092">
    <property type="entry name" value="ZapD"/>
    <property type="match status" value="1"/>
</dbReference>
<dbReference type="InterPro" id="IPR009777">
    <property type="entry name" value="ZapD"/>
</dbReference>
<dbReference type="InterPro" id="IPR027462">
    <property type="entry name" value="ZapD_C"/>
</dbReference>
<dbReference type="InterPro" id="IPR036268">
    <property type="entry name" value="ZapD_sf"/>
</dbReference>
<dbReference type="NCBIfam" id="NF003653">
    <property type="entry name" value="PRK05287.1-1"/>
    <property type="match status" value="1"/>
</dbReference>
<dbReference type="NCBIfam" id="NF003655">
    <property type="entry name" value="PRK05287.1-3"/>
    <property type="match status" value="1"/>
</dbReference>
<dbReference type="PANTHER" id="PTHR39455">
    <property type="entry name" value="CELL DIVISION PROTEIN ZAPD"/>
    <property type="match status" value="1"/>
</dbReference>
<dbReference type="PANTHER" id="PTHR39455:SF1">
    <property type="entry name" value="CELL DIVISION PROTEIN ZAPD"/>
    <property type="match status" value="1"/>
</dbReference>
<dbReference type="Pfam" id="PF07072">
    <property type="entry name" value="ZapD"/>
    <property type="match status" value="1"/>
</dbReference>
<dbReference type="SUPFAM" id="SSF160950">
    <property type="entry name" value="YacF-like"/>
    <property type="match status" value="1"/>
</dbReference>
<protein>
    <recommendedName>
        <fullName evidence="1">Cell division protein ZapD</fullName>
    </recommendedName>
    <alternativeName>
        <fullName evidence="1">Z ring-associated protein D</fullName>
    </alternativeName>
</protein>